<name>VF184_IIV6</name>
<sequence>MTDVFKVLTPAKNINGEHTHVSMGDTKGTWYLSLNKSQEFYNVYGLALKNGQKLSLAEKPGEYVPLLVDIDLKKEVNGYPNYGSNDFYNDEDIINVVKIFQNAVSENVNRHAKKLTNKNLRCVVLEKDIFIERINESEDKYIVKKGIHLHFPHLFLPKKDIKNSFMPVVKTMIDQENVFQDFINSMDNQIMPSSLIDDISSKYWLMYGSSKEGLNKPYKISKILDHNQQEISISKCFKSETCIDGSPITDTNVEFELPMLLSINPKPSIISNKLFYFKEAPVKLCDALLPVVNNNREKEGRMSSREIEKMKKLTSFLSVSRADDYNQWWTVGITLFNIGTGRDCEEEALEAWKMFSSQSTKYDESRCDLEWAEMKKKNRPLNARTMGSLIFMAKSDNPVALEKYLLAEQMNIENWTSHQNLDVESIKKLKVPVFDTEIAEMFVSQHEDEYLNGNLGWFKFNGTIWSSLESVGRHMRPSLVSLSRSYLNLIPALKYITKTLQNDDEGYEPSDSGFGFDDDDSASTSGGKTTAEITKLVNSKIKLINDLAKKCQNNGPQMSLMKVIEDMIGIDNLNDKMDQNKQLIAFTNGVYDLSLFTFRQGLPEDYITRQMTIPYDITLTMENPKVIKMLNFFKKIFPDEELFEYFMLENCEMYIGGNRDKILQIWTGEGDNGKSVTNKIIENKFGKLSVKFPKGMVTGDPPKAGACFPELTRAQRGVRWAVVDEFAPDETVNAGVIKNLTGGIDNLYARDIQQKGKDVIDIDPFFKLIFICNTIPNIRNPDNATWNRIRVIPFESTFKDSIDDISLEEQKRDKIFLKDTSFCEKETIRELGEAFAWYLIQVFIKKEQARRDARLNGKSFKIKIPAKVNEATELYKAQGNAIADYFNDKFEISDDDNDTINIKLYYQDFLLWFSQTHSNKNVNIDKKKFMKLFVQHAKGDMNTFICTKLKLKETLEEFNLENNEENGMPLF</sequence>
<organismHost>
    <name type="scientific">Acheta domesticus</name>
    <name type="common">House cricket</name>
    <dbReference type="NCBI Taxonomy" id="6997"/>
</organismHost>
<organismHost>
    <name type="scientific">Chilo suppressalis</name>
    <name type="common">Asiatic rice borer moth</name>
    <dbReference type="NCBI Taxonomy" id="168631"/>
</organismHost>
<organismHost>
    <name type="scientific">Gryllus bimaculatus</name>
    <name type="common">Two-spotted cricket</name>
    <dbReference type="NCBI Taxonomy" id="6999"/>
</organismHost>
<organismHost>
    <name type="scientific">Gryllus campestris</name>
    <dbReference type="NCBI Taxonomy" id="58607"/>
</organismHost>
<organismHost>
    <name type="scientific">Spodoptera frugiperda</name>
    <name type="common">Fall armyworm</name>
    <dbReference type="NCBI Taxonomy" id="7108"/>
</organismHost>
<dbReference type="EC" id="3.6.4.-"/>
<dbReference type="EMBL" id="AF303741">
    <property type="protein sequence ID" value="AAB94479.1"/>
    <property type="molecule type" value="Genomic_DNA"/>
</dbReference>
<dbReference type="PIR" id="T03181">
    <property type="entry name" value="T03181"/>
</dbReference>
<dbReference type="RefSeq" id="NP_149647.1">
    <property type="nucleotide sequence ID" value="NC_003038.1"/>
</dbReference>
<dbReference type="KEGG" id="vg:1733035"/>
<dbReference type="OrthoDB" id="987at10239"/>
<dbReference type="Proteomes" id="UP000001359">
    <property type="component" value="Genome"/>
</dbReference>
<dbReference type="GO" id="GO:0005524">
    <property type="term" value="F:ATP binding"/>
    <property type="evidence" value="ECO:0007669"/>
    <property type="project" value="UniProtKB-KW"/>
</dbReference>
<dbReference type="GO" id="GO:0004386">
    <property type="term" value="F:helicase activity"/>
    <property type="evidence" value="ECO:0007669"/>
    <property type="project" value="UniProtKB-KW"/>
</dbReference>
<dbReference type="GO" id="GO:0016817">
    <property type="term" value="F:hydrolase activity, acting on acid anhydrides"/>
    <property type="evidence" value="ECO:0007669"/>
    <property type="project" value="InterPro"/>
</dbReference>
<dbReference type="Gene3D" id="3.40.50.300">
    <property type="entry name" value="P-loop containing nucleotide triphosphate hydrolases"/>
    <property type="match status" value="1"/>
</dbReference>
<dbReference type="InterPro" id="IPR056443">
    <property type="entry name" value="AEP_C962R"/>
</dbReference>
<dbReference type="InterPro" id="IPR014015">
    <property type="entry name" value="Helicase_SF3_DNA-vir"/>
</dbReference>
<dbReference type="InterPro" id="IPR027417">
    <property type="entry name" value="P-loop_NTPase"/>
</dbReference>
<dbReference type="InterPro" id="IPR014818">
    <property type="entry name" value="Phage/plasmid_primase_P4_C"/>
</dbReference>
<dbReference type="InterPro" id="IPR014819">
    <property type="entry name" value="PriCT_2"/>
</dbReference>
<dbReference type="InterPro" id="IPR051620">
    <property type="entry name" value="Viral_Helicase-Primase_Cplx"/>
</dbReference>
<dbReference type="PANTHER" id="PTHR35372">
    <property type="entry name" value="ATP BINDING PROTEIN-RELATED"/>
    <property type="match status" value="1"/>
</dbReference>
<dbReference type="PANTHER" id="PTHR35372:SF2">
    <property type="entry name" value="SF3 HELICASE DOMAIN-CONTAINING PROTEIN"/>
    <property type="match status" value="1"/>
</dbReference>
<dbReference type="Pfam" id="PF23162">
    <property type="entry name" value="AEP_C962R"/>
    <property type="match status" value="1"/>
</dbReference>
<dbReference type="Pfam" id="PF08706">
    <property type="entry name" value="D5_N"/>
    <property type="match status" value="1"/>
</dbReference>
<dbReference type="Pfam" id="PF08707">
    <property type="entry name" value="PriCT_2"/>
    <property type="match status" value="1"/>
</dbReference>
<dbReference type="PROSITE" id="PS51206">
    <property type="entry name" value="SF3_HELICASE_1"/>
    <property type="match status" value="1"/>
</dbReference>
<accession>O55768</accession>
<comment type="similarity">
    <text evidence="3">Belongs to the IIV-6 184R family.</text>
</comment>
<reference key="1">
    <citation type="journal article" date="2001" name="Virology">
        <title>Analysis of the first complete DNA sequence of an invertebrate iridovirus: coding strategy of the genome of Chilo iridescent virus.</title>
        <authorList>
            <person name="Jakob N.J."/>
            <person name="Mueller K."/>
            <person name="Bahr U."/>
            <person name="Darai G."/>
        </authorList>
    </citation>
    <scope>NUCLEOTIDE SEQUENCE [LARGE SCALE GENOMIC DNA]</scope>
</reference>
<reference key="2">
    <citation type="journal article" date="2007" name="Virol. J.">
        <title>Comparative genomic analysis of the family Iridoviridae: re-annotating and defining the core set of iridovirus genes.</title>
        <authorList>
            <person name="Eaton H.E."/>
            <person name="Metcalf J."/>
            <person name="Penny E."/>
            <person name="Tcherepanov V."/>
            <person name="Upton C."/>
            <person name="Brunetti C.R."/>
        </authorList>
    </citation>
    <scope>GENOME REANNOTATION</scope>
</reference>
<gene>
    <name type="ORF">IIV6-184R</name>
</gene>
<protein>
    <recommendedName>
        <fullName>Putative helicase 184R</fullName>
        <ecNumber>3.6.4.-</ecNumber>
    </recommendedName>
</protein>
<organism>
    <name type="scientific">Invertebrate iridescent virus 6</name>
    <name type="common">IIV-6</name>
    <name type="synonym">Chilo iridescent virus</name>
    <dbReference type="NCBI Taxonomy" id="176652"/>
    <lineage>
        <taxon>Viruses</taxon>
        <taxon>Varidnaviria</taxon>
        <taxon>Bamfordvirae</taxon>
        <taxon>Nucleocytoviricota</taxon>
        <taxon>Megaviricetes</taxon>
        <taxon>Pimascovirales</taxon>
        <taxon>Iridoviridae</taxon>
        <taxon>Betairidovirinae</taxon>
        <taxon>Iridovirus</taxon>
    </lineage>
</organism>
<evidence type="ECO:0000255" key="1">
    <source>
        <dbReference type="PROSITE-ProRule" id="PRU00551"/>
    </source>
</evidence>
<evidence type="ECO:0000256" key="2">
    <source>
        <dbReference type="SAM" id="MobiDB-lite"/>
    </source>
</evidence>
<evidence type="ECO:0000305" key="3"/>
<feature type="chain" id="PRO_0000378038" description="Putative helicase 184R">
    <location>
        <begin position="1"/>
        <end position="971"/>
    </location>
</feature>
<feature type="domain" description="SF3 helicase" evidence="1">
    <location>
        <begin position="624"/>
        <end position="807"/>
    </location>
</feature>
<feature type="region of interest" description="Disordered" evidence="2">
    <location>
        <begin position="506"/>
        <end position="528"/>
    </location>
</feature>
<feature type="binding site" evidence="1">
    <location>
        <begin position="668"/>
        <end position="675"/>
    </location>
    <ligand>
        <name>ATP</name>
        <dbReference type="ChEBI" id="CHEBI:30616"/>
    </ligand>
</feature>
<proteinExistence type="inferred from homology"/>
<keyword id="KW-0067">ATP-binding</keyword>
<keyword id="KW-0347">Helicase</keyword>
<keyword id="KW-0378">Hydrolase</keyword>
<keyword id="KW-0547">Nucleotide-binding</keyword>
<keyword id="KW-1185">Reference proteome</keyword>